<reference key="1">
    <citation type="submission" date="2006-12" db="EMBL/GenBank/DDBJ databases">
        <title>Complete sequence of Mycobacterium vanbaalenii PYR-1.</title>
        <authorList>
            <consortium name="US DOE Joint Genome Institute"/>
            <person name="Copeland A."/>
            <person name="Lucas S."/>
            <person name="Lapidus A."/>
            <person name="Barry K."/>
            <person name="Detter J.C."/>
            <person name="Glavina del Rio T."/>
            <person name="Hammon N."/>
            <person name="Israni S."/>
            <person name="Dalin E."/>
            <person name="Tice H."/>
            <person name="Pitluck S."/>
            <person name="Singan V."/>
            <person name="Schmutz J."/>
            <person name="Larimer F."/>
            <person name="Land M."/>
            <person name="Hauser L."/>
            <person name="Kyrpides N."/>
            <person name="Anderson I.J."/>
            <person name="Miller C."/>
            <person name="Richardson P."/>
        </authorList>
    </citation>
    <scope>NUCLEOTIDE SEQUENCE [LARGE SCALE GENOMIC DNA]</scope>
    <source>
        <strain>DSM 7251 / JCM 13017 / BCRC 16820 / KCTC 9966 / NRRL B-24157 / PYR-1</strain>
    </source>
</reference>
<name>ACDH1_MYCVP</name>
<protein>
    <recommendedName>
        <fullName>Probable inactive acetaldehyde dehydrogenase 1</fullName>
    </recommendedName>
    <alternativeName>
        <fullName>Acetaldehyde dehydrogenase [acetylating] 1</fullName>
    </alternativeName>
</protein>
<keyword id="KW-0520">NAD</keyword>
<organism>
    <name type="scientific">Mycolicibacterium vanbaalenii (strain DSM 7251 / JCM 13017 / BCRC 16820 / KCTC 9966 / NRRL B-24157 / PYR-1)</name>
    <name type="common">Mycobacterium vanbaalenii</name>
    <dbReference type="NCBI Taxonomy" id="350058"/>
    <lineage>
        <taxon>Bacteria</taxon>
        <taxon>Bacillati</taxon>
        <taxon>Actinomycetota</taxon>
        <taxon>Actinomycetes</taxon>
        <taxon>Mycobacteriales</taxon>
        <taxon>Mycobacteriaceae</taxon>
        <taxon>Mycolicibacterium</taxon>
    </lineage>
</organism>
<dbReference type="EMBL" id="CP000511">
    <property type="protein sequence ID" value="ABM11435.1"/>
    <property type="molecule type" value="Genomic_DNA"/>
</dbReference>
<dbReference type="RefSeq" id="WP_011777872.1">
    <property type="nucleotide sequence ID" value="NC_008726.1"/>
</dbReference>
<dbReference type="SMR" id="A1T2N5"/>
<dbReference type="STRING" id="350058.Mvan_0596"/>
<dbReference type="KEGG" id="mva:Mvan_0596"/>
<dbReference type="eggNOG" id="COG4569">
    <property type="taxonomic scope" value="Bacteria"/>
</dbReference>
<dbReference type="HOGENOM" id="CLU_062208_0_0_11"/>
<dbReference type="Proteomes" id="UP000009159">
    <property type="component" value="Chromosome"/>
</dbReference>
<dbReference type="GO" id="GO:0008774">
    <property type="term" value="F:acetaldehyde dehydrogenase (acetylating) activity"/>
    <property type="evidence" value="ECO:0007669"/>
    <property type="project" value="UniProtKB-UniRule"/>
</dbReference>
<dbReference type="GO" id="GO:0051287">
    <property type="term" value="F:NAD binding"/>
    <property type="evidence" value="ECO:0007669"/>
    <property type="project" value="UniProtKB-UniRule"/>
</dbReference>
<dbReference type="GO" id="GO:0009056">
    <property type="term" value="P:catabolic process"/>
    <property type="evidence" value="ECO:0007669"/>
    <property type="project" value="InterPro"/>
</dbReference>
<dbReference type="CDD" id="cd23933">
    <property type="entry name" value="ALDH_C"/>
    <property type="match status" value="1"/>
</dbReference>
<dbReference type="Gene3D" id="3.30.360.10">
    <property type="entry name" value="Dihydrodipicolinate Reductase, domain 2"/>
    <property type="match status" value="1"/>
</dbReference>
<dbReference type="Gene3D" id="3.40.50.720">
    <property type="entry name" value="NAD(P)-binding Rossmann-like Domain"/>
    <property type="match status" value="1"/>
</dbReference>
<dbReference type="HAMAP" id="MF_01657">
    <property type="entry name" value="Ac_ald_DH_ac"/>
    <property type="match status" value="1"/>
</dbReference>
<dbReference type="InterPro" id="IPR003361">
    <property type="entry name" value="Acetaldehyde_dehydrogenase"/>
</dbReference>
<dbReference type="InterPro" id="IPR015426">
    <property type="entry name" value="Acetylaldehyde_DH_C"/>
</dbReference>
<dbReference type="InterPro" id="IPR036291">
    <property type="entry name" value="NAD(P)-bd_dom_sf"/>
</dbReference>
<dbReference type="InterPro" id="IPR000534">
    <property type="entry name" value="Semialdehyde_DH_NAD-bd"/>
</dbReference>
<dbReference type="NCBIfam" id="TIGR03215">
    <property type="entry name" value="ac_ald_DH_ac"/>
    <property type="match status" value="1"/>
</dbReference>
<dbReference type="NCBIfam" id="NF006157">
    <property type="entry name" value="PRK08300.1"/>
    <property type="match status" value="1"/>
</dbReference>
<dbReference type="Pfam" id="PF09290">
    <property type="entry name" value="AcetDehyd-dimer"/>
    <property type="match status" value="1"/>
</dbReference>
<dbReference type="PIRSF" id="PIRSF015689">
    <property type="entry name" value="Actaldh_dh_actl"/>
    <property type="match status" value="1"/>
</dbReference>
<dbReference type="SMART" id="SM00859">
    <property type="entry name" value="Semialdhyde_dh"/>
    <property type="match status" value="1"/>
</dbReference>
<dbReference type="SUPFAM" id="SSF55347">
    <property type="entry name" value="Glyceraldehyde-3-phosphate dehydrogenase-like, C-terminal domain"/>
    <property type="match status" value="1"/>
</dbReference>
<dbReference type="SUPFAM" id="SSF51735">
    <property type="entry name" value="NAD(P)-binding Rossmann-fold domains"/>
    <property type="match status" value="1"/>
</dbReference>
<comment type="similarity">
    <text evidence="1 2">Belongs to the acetaldehyde dehydrogenase family.</text>
</comment>
<comment type="caution">
    <text evidence="2">In contrast to other members of the family, lacks the conserved Cys active site in position 129, suggesting it is inactive.</text>
</comment>
<accession>A1T2N5</accession>
<feature type="chain" id="PRO_0000387692" description="Probable inactive acetaldehyde dehydrogenase 1">
    <location>
        <begin position="1"/>
        <end position="315"/>
    </location>
</feature>
<feature type="binding site" evidence="1">
    <location>
        <begin position="14"/>
        <end position="17"/>
    </location>
    <ligand>
        <name>NAD(+)</name>
        <dbReference type="ChEBI" id="CHEBI:57540"/>
    </ligand>
</feature>
<feature type="binding site" evidence="1">
    <location>
        <position position="288"/>
    </location>
    <ligand>
        <name>NAD(+)</name>
        <dbReference type="ChEBI" id="CHEBI:57540"/>
    </ligand>
</feature>
<gene>
    <name type="ordered locus">Mvan_0596</name>
</gene>
<proteinExistence type="inferred from homology"/>
<evidence type="ECO:0000255" key="1">
    <source>
        <dbReference type="HAMAP-Rule" id="MF_01657"/>
    </source>
</evidence>
<evidence type="ECO:0000305" key="2"/>
<sequence length="315" mass="32447">MTPTVKCPVAILGSGDVGTDLMMKILRSDGPLTVGALVGLDPEPGGLARAERLGVPTSAAGIDGLPAMPEFGDIGIVFDATPAGAPRAELEKAGVCVLDLNPAVVGPHCVPAVNLEDHLDTPNLNLVTGAGQATVPIVAAVGRVGAVSYAETVTSVAAKSADPATRANIDESIETTTAALRTVGGARRARSIFIINPADPPILMRNTVYCLVDGDVPRGDIEQSIAAMVERVTSYVPGYRLKQRVQFETFTATDPLHIPETGGFTGTRVTVLVEVTAGEPHLPGYAGNLEMMTSAAKAAAERIALHRSRTAGAAT</sequence>